<sequence>MTIAFQSAVFALIAISFLLVIGVPVALASPDGWSSSKNVVFSGVSLWIGSVLFVGILNSFIS</sequence>
<geneLocation type="chloroplast"/>
<name>PSBZ_PINTH</name>
<evidence type="ECO:0000255" key="1">
    <source>
        <dbReference type="HAMAP-Rule" id="MF_00644"/>
    </source>
</evidence>
<feature type="chain" id="PRO_0000217723" description="Photosystem II reaction center protein Z">
    <location>
        <begin position="1"/>
        <end position="62"/>
    </location>
</feature>
<feature type="transmembrane region" description="Helical" evidence="1">
    <location>
        <begin position="8"/>
        <end position="28"/>
    </location>
</feature>
<feature type="transmembrane region" description="Helical" evidence="1">
    <location>
        <begin position="41"/>
        <end position="61"/>
    </location>
</feature>
<organism>
    <name type="scientific">Pinus thunbergii</name>
    <name type="common">Japanese black pine</name>
    <name type="synonym">Pinus thunbergiana</name>
    <dbReference type="NCBI Taxonomy" id="3350"/>
    <lineage>
        <taxon>Eukaryota</taxon>
        <taxon>Viridiplantae</taxon>
        <taxon>Streptophyta</taxon>
        <taxon>Embryophyta</taxon>
        <taxon>Tracheophyta</taxon>
        <taxon>Spermatophyta</taxon>
        <taxon>Pinopsida</taxon>
        <taxon>Pinidae</taxon>
        <taxon>Conifers I</taxon>
        <taxon>Pinales</taxon>
        <taxon>Pinaceae</taxon>
        <taxon>Pinus</taxon>
        <taxon>Pinus subgen. Pinus</taxon>
    </lineage>
</organism>
<accession>P41642</accession>
<comment type="function">
    <text evidence="1">May control the interaction of photosystem II (PSII) cores with the light-harvesting antenna, regulates electron flow through the 2 photosystem reaction centers. PSII is a light-driven water plastoquinone oxidoreductase, using light energy to abstract electrons from H(2)O, generating a proton gradient subsequently used for ATP formation.</text>
</comment>
<comment type="subunit">
    <text evidence="1">PSII is composed of 1 copy each of membrane proteins PsbA, PsbB, PsbC, PsbD, PsbE, PsbF, PsbH, PsbI, PsbJ, PsbK, PsbL, PsbM, PsbT, PsbY, PsbZ, Psb30/Ycf12, at least 3 peripheral proteins of the oxygen-evolving complex and a large number of cofactors. It forms dimeric complexes.</text>
</comment>
<comment type="subcellular location">
    <subcellularLocation>
        <location evidence="1">Plastid</location>
        <location evidence="1">Chloroplast thylakoid membrane</location>
        <topology evidence="1">Multi-pass membrane protein</topology>
    </subcellularLocation>
</comment>
<comment type="similarity">
    <text evidence="1">Belongs to the PsbZ family.</text>
</comment>
<reference key="1">
    <citation type="journal article" date="1994" name="Proc. Natl. Acad. Sci. U.S.A.">
        <title>Loss of all ndh genes as determined by sequencing the entire chloroplast genome of the black pine Pinus thunbergii.</title>
        <authorList>
            <person name="Wakasugi T."/>
            <person name="Tsudzuki J."/>
            <person name="Ito S."/>
            <person name="Nakashima K."/>
            <person name="Tsudzuki T."/>
            <person name="Sugiura M."/>
        </authorList>
    </citation>
    <scope>NUCLEOTIDE SEQUENCE [LARGE SCALE GENOMIC DNA]</scope>
</reference>
<gene>
    <name evidence="1" type="primary">psbZ</name>
    <name type="synonym">ycf9</name>
</gene>
<proteinExistence type="inferred from homology"/>
<protein>
    <recommendedName>
        <fullName evidence="1">Photosystem II reaction center protein Z</fullName>
        <shortName evidence="1">PSII-Z</shortName>
    </recommendedName>
</protein>
<keyword id="KW-0150">Chloroplast</keyword>
<keyword id="KW-0472">Membrane</keyword>
<keyword id="KW-0602">Photosynthesis</keyword>
<keyword id="KW-0604">Photosystem II</keyword>
<keyword id="KW-0934">Plastid</keyword>
<keyword id="KW-0674">Reaction center</keyword>
<keyword id="KW-0793">Thylakoid</keyword>
<keyword id="KW-0812">Transmembrane</keyword>
<keyword id="KW-1133">Transmembrane helix</keyword>
<dbReference type="EMBL" id="D17510">
    <property type="protein sequence ID" value="BAA04422.1"/>
    <property type="molecule type" value="Genomic_DNA"/>
</dbReference>
<dbReference type="PIR" id="T07546">
    <property type="entry name" value="T07546"/>
</dbReference>
<dbReference type="RefSeq" id="NP_042467.1">
    <property type="nucleotide sequence ID" value="NC_001631.1"/>
</dbReference>
<dbReference type="SMR" id="P41642"/>
<dbReference type="GeneID" id="1457599"/>
<dbReference type="GO" id="GO:0009535">
    <property type="term" value="C:chloroplast thylakoid membrane"/>
    <property type="evidence" value="ECO:0007669"/>
    <property type="project" value="UniProtKB-SubCell"/>
</dbReference>
<dbReference type="GO" id="GO:0009539">
    <property type="term" value="C:photosystem II reaction center"/>
    <property type="evidence" value="ECO:0007669"/>
    <property type="project" value="InterPro"/>
</dbReference>
<dbReference type="GO" id="GO:0015979">
    <property type="term" value="P:photosynthesis"/>
    <property type="evidence" value="ECO:0007669"/>
    <property type="project" value="UniProtKB-UniRule"/>
</dbReference>
<dbReference type="GO" id="GO:0042549">
    <property type="term" value="P:photosystem II stabilization"/>
    <property type="evidence" value="ECO:0007669"/>
    <property type="project" value="InterPro"/>
</dbReference>
<dbReference type="Gene3D" id="1.10.287.740">
    <property type="entry name" value="Photosystem II PsbZ, reaction centre"/>
    <property type="match status" value="1"/>
</dbReference>
<dbReference type="HAMAP" id="MF_00644">
    <property type="entry name" value="PSII_PsbZ"/>
    <property type="match status" value="1"/>
</dbReference>
<dbReference type="InterPro" id="IPR002644">
    <property type="entry name" value="PSII_PsbZ"/>
</dbReference>
<dbReference type="InterPro" id="IPR036512">
    <property type="entry name" value="PSII_PsbZ_sf"/>
</dbReference>
<dbReference type="NCBIfam" id="TIGR03043">
    <property type="entry name" value="PS_II_psbZ"/>
    <property type="match status" value="1"/>
</dbReference>
<dbReference type="PANTHER" id="PTHR34971">
    <property type="entry name" value="PHOTOSYSTEM II REACTION CENTER PROTEIN Z"/>
    <property type="match status" value="1"/>
</dbReference>
<dbReference type="PANTHER" id="PTHR34971:SF2">
    <property type="entry name" value="PHOTOSYSTEM II REACTION CENTER PROTEIN Z"/>
    <property type="match status" value="1"/>
</dbReference>
<dbReference type="Pfam" id="PF01737">
    <property type="entry name" value="Ycf9"/>
    <property type="match status" value="1"/>
</dbReference>
<dbReference type="SUPFAM" id="SSF161055">
    <property type="entry name" value="PsbZ-like"/>
    <property type="match status" value="1"/>
</dbReference>